<sequence>MSLTRLLIKDFRNIENADLALSPGFNFLVGANGSGKTSVLEAIYTLGHGRAFRSLQPGRVIRHEQEAFVLHGRLQGEERETSIGLTKDKQGDSKVRIDGTDGHKIAELAHLMPMQLITPEGFTLLNGGPKYRRAFLDWGCFHNEAGFFTAWSNLKRLLKQRNAALRQVSRYEQLRPWDKELIPLAEQISTWRAEYSSAIAQDMADTCQQFLPEFSLTFSFQRGWEKETDYADVLERSFERDRMLTYTAHGPHKADFRIRADGAPVEDTLSRGQLKLLMCALRLAQGEFLTRESGRRCLYLIDDFASELDDARRGLLASRLKATQSQVFVSAISAEHVIDMSDENSKMFTVEKGKITD</sequence>
<keyword id="KW-0067">ATP-binding</keyword>
<keyword id="KW-0963">Cytoplasm</keyword>
<keyword id="KW-0227">DNA damage</keyword>
<keyword id="KW-0234">DNA repair</keyword>
<keyword id="KW-0235">DNA replication</keyword>
<keyword id="KW-0238">DNA-binding</keyword>
<keyword id="KW-0547">Nucleotide-binding</keyword>
<keyword id="KW-0742">SOS response</keyword>
<feature type="chain" id="PRO_1000121147" description="DNA replication and repair protein RecF">
    <location>
        <begin position="1"/>
        <end position="357"/>
    </location>
</feature>
<feature type="binding site" evidence="1">
    <location>
        <begin position="30"/>
        <end position="37"/>
    </location>
    <ligand>
        <name>ATP</name>
        <dbReference type="ChEBI" id="CHEBI:30616"/>
    </ligand>
</feature>
<evidence type="ECO:0000255" key="1">
    <source>
        <dbReference type="HAMAP-Rule" id="MF_00365"/>
    </source>
</evidence>
<protein>
    <recommendedName>
        <fullName evidence="1">DNA replication and repair protein RecF</fullName>
    </recommendedName>
</protein>
<comment type="function">
    <text evidence="1">The RecF protein is involved in DNA metabolism; it is required for DNA replication and normal SOS inducibility. RecF binds preferentially to single-stranded, linear DNA. It also seems to bind ATP.</text>
</comment>
<comment type="subcellular location">
    <subcellularLocation>
        <location evidence="1">Cytoplasm</location>
    </subcellularLocation>
</comment>
<comment type="similarity">
    <text evidence="1">Belongs to the RecF family.</text>
</comment>
<gene>
    <name evidence="1" type="primary">recF</name>
    <name type="ordered locus">SeD_A4228</name>
</gene>
<proteinExistence type="inferred from homology"/>
<reference key="1">
    <citation type="journal article" date="2011" name="J. Bacteriol.">
        <title>Comparative genomics of 28 Salmonella enterica isolates: evidence for CRISPR-mediated adaptive sublineage evolution.</title>
        <authorList>
            <person name="Fricke W.F."/>
            <person name="Mammel M.K."/>
            <person name="McDermott P.F."/>
            <person name="Tartera C."/>
            <person name="White D.G."/>
            <person name="Leclerc J.E."/>
            <person name="Ravel J."/>
            <person name="Cebula T.A."/>
        </authorList>
    </citation>
    <scope>NUCLEOTIDE SEQUENCE [LARGE SCALE GENOMIC DNA]</scope>
    <source>
        <strain>CT_02021853</strain>
    </source>
</reference>
<accession>B5FN08</accession>
<name>RECF_SALDC</name>
<dbReference type="EMBL" id="CP001144">
    <property type="protein sequence ID" value="ACH76784.1"/>
    <property type="molecule type" value="Genomic_DNA"/>
</dbReference>
<dbReference type="RefSeq" id="WP_000060081.1">
    <property type="nucleotide sequence ID" value="NC_011205.1"/>
</dbReference>
<dbReference type="SMR" id="B5FN08"/>
<dbReference type="KEGG" id="sed:SeD_A4228"/>
<dbReference type="HOGENOM" id="CLU_040267_0_0_6"/>
<dbReference type="Proteomes" id="UP000008322">
    <property type="component" value="Chromosome"/>
</dbReference>
<dbReference type="GO" id="GO:0005737">
    <property type="term" value="C:cytoplasm"/>
    <property type="evidence" value="ECO:0007669"/>
    <property type="project" value="UniProtKB-SubCell"/>
</dbReference>
<dbReference type="GO" id="GO:0005524">
    <property type="term" value="F:ATP binding"/>
    <property type="evidence" value="ECO:0007669"/>
    <property type="project" value="UniProtKB-UniRule"/>
</dbReference>
<dbReference type="GO" id="GO:0003697">
    <property type="term" value="F:single-stranded DNA binding"/>
    <property type="evidence" value="ECO:0007669"/>
    <property type="project" value="UniProtKB-UniRule"/>
</dbReference>
<dbReference type="GO" id="GO:0006260">
    <property type="term" value="P:DNA replication"/>
    <property type="evidence" value="ECO:0007669"/>
    <property type="project" value="UniProtKB-UniRule"/>
</dbReference>
<dbReference type="GO" id="GO:0000731">
    <property type="term" value="P:DNA synthesis involved in DNA repair"/>
    <property type="evidence" value="ECO:0007669"/>
    <property type="project" value="TreeGrafter"/>
</dbReference>
<dbReference type="GO" id="GO:0006302">
    <property type="term" value="P:double-strand break repair"/>
    <property type="evidence" value="ECO:0007669"/>
    <property type="project" value="TreeGrafter"/>
</dbReference>
<dbReference type="GO" id="GO:0009432">
    <property type="term" value="P:SOS response"/>
    <property type="evidence" value="ECO:0007669"/>
    <property type="project" value="UniProtKB-UniRule"/>
</dbReference>
<dbReference type="FunFam" id="1.20.1050.90:FF:000001">
    <property type="entry name" value="DNA replication and repair protein RecF"/>
    <property type="match status" value="1"/>
</dbReference>
<dbReference type="Gene3D" id="3.40.50.300">
    <property type="entry name" value="P-loop containing nucleotide triphosphate hydrolases"/>
    <property type="match status" value="1"/>
</dbReference>
<dbReference type="Gene3D" id="1.20.1050.90">
    <property type="entry name" value="RecF/RecN/SMC, N-terminal domain"/>
    <property type="match status" value="1"/>
</dbReference>
<dbReference type="HAMAP" id="MF_00365">
    <property type="entry name" value="RecF"/>
    <property type="match status" value="1"/>
</dbReference>
<dbReference type="InterPro" id="IPR001238">
    <property type="entry name" value="DNA-binding_RecF"/>
</dbReference>
<dbReference type="InterPro" id="IPR018078">
    <property type="entry name" value="DNA-binding_RecF_CS"/>
</dbReference>
<dbReference type="InterPro" id="IPR027417">
    <property type="entry name" value="P-loop_NTPase"/>
</dbReference>
<dbReference type="InterPro" id="IPR003395">
    <property type="entry name" value="RecF/RecN/SMC_N"/>
</dbReference>
<dbReference type="InterPro" id="IPR042174">
    <property type="entry name" value="RecF_2"/>
</dbReference>
<dbReference type="NCBIfam" id="TIGR00611">
    <property type="entry name" value="recf"/>
    <property type="match status" value="1"/>
</dbReference>
<dbReference type="PANTHER" id="PTHR32182">
    <property type="entry name" value="DNA REPLICATION AND REPAIR PROTEIN RECF"/>
    <property type="match status" value="1"/>
</dbReference>
<dbReference type="PANTHER" id="PTHR32182:SF0">
    <property type="entry name" value="DNA REPLICATION AND REPAIR PROTEIN RECF"/>
    <property type="match status" value="1"/>
</dbReference>
<dbReference type="Pfam" id="PF02463">
    <property type="entry name" value="SMC_N"/>
    <property type="match status" value="1"/>
</dbReference>
<dbReference type="SUPFAM" id="SSF52540">
    <property type="entry name" value="P-loop containing nucleoside triphosphate hydrolases"/>
    <property type="match status" value="1"/>
</dbReference>
<dbReference type="PROSITE" id="PS00617">
    <property type="entry name" value="RECF_1"/>
    <property type="match status" value="1"/>
</dbReference>
<dbReference type="PROSITE" id="PS00618">
    <property type="entry name" value="RECF_2"/>
    <property type="match status" value="1"/>
</dbReference>
<organism>
    <name type="scientific">Salmonella dublin (strain CT_02021853)</name>
    <dbReference type="NCBI Taxonomy" id="439851"/>
    <lineage>
        <taxon>Bacteria</taxon>
        <taxon>Pseudomonadati</taxon>
        <taxon>Pseudomonadota</taxon>
        <taxon>Gammaproteobacteria</taxon>
        <taxon>Enterobacterales</taxon>
        <taxon>Enterobacteriaceae</taxon>
        <taxon>Salmonella</taxon>
    </lineage>
</organism>